<evidence type="ECO:0000250" key="1"/>
<evidence type="ECO:0000255" key="2"/>
<evidence type="ECO:0000305" key="3"/>
<name>FLID_VIBCH</name>
<protein>
    <recommendedName>
        <fullName>Flagellar hook-associated protein 2</fullName>
        <shortName>HAP2</shortName>
    </recommendedName>
    <alternativeName>
        <fullName>Filament cap protein</fullName>
    </alternativeName>
    <alternativeName>
        <fullName>Flagellar cap protein</fullName>
    </alternativeName>
</protein>
<organism>
    <name type="scientific">Vibrio cholerae serotype O1 (strain ATCC 39315 / El Tor Inaba N16961)</name>
    <dbReference type="NCBI Taxonomy" id="243277"/>
    <lineage>
        <taxon>Bacteria</taxon>
        <taxon>Pseudomonadati</taxon>
        <taxon>Pseudomonadota</taxon>
        <taxon>Gammaproteobacteria</taxon>
        <taxon>Vibrionales</taxon>
        <taxon>Vibrionaceae</taxon>
        <taxon>Vibrio</taxon>
    </lineage>
</organism>
<gene>
    <name type="primary">fliD</name>
    <name type="ordered locus">VC_2140</name>
</gene>
<proteinExistence type="inferred from homology"/>
<keyword id="KW-0975">Bacterial flagellum</keyword>
<keyword id="KW-0175">Coiled coil</keyword>
<keyword id="KW-1185">Reference proteome</keyword>
<keyword id="KW-0964">Secreted</keyword>
<comment type="function">
    <text evidence="1">Required for the morphogenesis and for the elongation of the flagellar filament by facilitating polymerization of the flagellin monomers at the tip of growing filament. Forms a capping structure, which prevents flagellin subunits (transported through the central channel of the flagellum) from leaking out without polymerization at the distal end (By similarity).</text>
</comment>
<comment type="subunit">
    <text evidence="1">Homopentamer.</text>
</comment>
<comment type="subcellular location">
    <subcellularLocation>
        <location>Secreted</location>
    </subcellularLocation>
    <subcellularLocation>
        <location>Bacterial flagellum</location>
    </subcellularLocation>
</comment>
<comment type="similarity">
    <text evidence="3">Belongs to the FliD family.</text>
</comment>
<feature type="chain" id="PRO_0000177028" description="Flagellar hook-associated protein 2">
    <location>
        <begin position="1"/>
        <end position="666"/>
    </location>
</feature>
<feature type="coiled-coil region" evidence="2">
    <location>
        <begin position="354"/>
        <end position="419"/>
    </location>
</feature>
<reference key="1">
    <citation type="journal article" date="2000" name="Nature">
        <title>DNA sequence of both chromosomes of the cholera pathogen Vibrio cholerae.</title>
        <authorList>
            <person name="Heidelberg J.F."/>
            <person name="Eisen J.A."/>
            <person name="Nelson W.C."/>
            <person name="Clayton R.A."/>
            <person name="Gwinn M.L."/>
            <person name="Dodson R.J."/>
            <person name="Haft D.H."/>
            <person name="Hickey E.K."/>
            <person name="Peterson J.D."/>
            <person name="Umayam L.A."/>
            <person name="Gill S.R."/>
            <person name="Nelson K.E."/>
            <person name="Read T.D."/>
            <person name="Tettelin H."/>
            <person name="Richardson D.L."/>
            <person name="Ermolaeva M.D."/>
            <person name="Vamathevan J.J."/>
            <person name="Bass S."/>
            <person name="Qin H."/>
            <person name="Dragoi I."/>
            <person name="Sellers P."/>
            <person name="McDonald L.A."/>
            <person name="Utterback T.R."/>
            <person name="Fleischmann R.D."/>
            <person name="Nierman W.C."/>
            <person name="White O."/>
            <person name="Salzberg S.L."/>
            <person name="Smith H.O."/>
            <person name="Colwell R.R."/>
            <person name="Mekalanos J.J."/>
            <person name="Venter J.C."/>
            <person name="Fraser C.M."/>
        </authorList>
    </citation>
    <scope>NUCLEOTIDE SEQUENCE [LARGE SCALE GENOMIC DNA]</scope>
    <source>
        <strain>ATCC 39315 / El Tor Inaba N16961</strain>
    </source>
</reference>
<sequence length="666" mass="72331">MSLGPMGMNTGFDINGMVSKIVSAERVPKQQRIDNERTNIDTSISAYGRLRESLDTMKNLMTQFRQEKAFAVRKVDTSNEQVVSATATTEAIAGNYSVDVLQLAQSHKIASEVLDKDAKFGPGKLHISLGDKSFTLDVQGNSKLVDIVRGINGEKSNPGVRASIINDVEGPRLIVASNVSGKDHSVKMSAQAEPGNPLKQLEYKTLEQRVRDLEKARAQAQQLIAPLTPEQQKVAAKVAEKIGDAARLVDQEVAQEIRSAAQSAQGAAGEALNAGELTESAVKAAANAASEAKKYIRPEDRIPGWTETASGTLLDSYWEPEEELDAQGQKKAADVPGWSNTASGTLLDSYVTPQEAQQKLEQKLAQEKAQIEAAIRSGKMTPEEAKAQARAKLSPEERAYIEQVEKAQAALNAAQSAFDGYGGMTEVQSAQDSMVVLDGVATLSSNNNIIENAIEGVNLTLKGKTDRNQPPAEIGIEYDRERVRNDIEQFVAAYNQFFQTSKELAGVDPRTGQAGPLAGDSIVRSADSRLKTVFSSSIEQAPENLKSLTEFGITTTRQGTLEINYAMLDRQLNNNFTKLGEFFGGNQGFAKRVEDAISSMTGVTGSIRTREKSLNEQTYRLDDDQRSLDRRMESLEKRTHAKFSAMQDATSKMQSQLAGMMNALGG</sequence>
<dbReference type="EMBL" id="AE003852">
    <property type="protein sequence ID" value="AAF95285.1"/>
    <property type="molecule type" value="Genomic_DNA"/>
</dbReference>
<dbReference type="PIR" id="G82111">
    <property type="entry name" value="G82111"/>
</dbReference>
<dbReference type="RefSeq" id="NP_231771.1">
    <property type="nucleotide sequence ID" value="NC_002505.1"/>
</dbReference>
<dbReference type="RefSeq" id="WP_000052031.1">
    <property type="nucleotide sequence ID" value="NZ_LT906614.1"/>
</dbReference>
<dbReference type="SMR" id="Q9KQ63"/>
<dbReference type="STRING" id="243277.VC_2140"/>
<dbReference type="DNASU" id="2613276"/>
<dbReference type="EnsemblBacteria" id="AAF95285">
    <property type="protein sequence ID" value="AAF95285"/>
    <property type="gene ID" value="VC_2140"/>
</dbReference>
<dbReference type="KEGG" id="vch:VC_2140"/>
<dbReference type="PATRIC" id="fig|243277.26.peg.2045"/>
<dbReference type="eggNOG" id="COG1345">
    <property type="taxonomic scope" value="Bacteria"/>
</dbReference>
<dbReference type="HOGENOM" id="CLU_015182_2_0_6"/>
<dbReference type="Proteomes" id="UP000000584">
    <property type="component" value="Chromosome 1"/>
</dbReference>
<dbReference type="GO" id="GO:0009421">
    <property type="term" value="C:bacterial-type flagellum filament cap"/>
    <property type="evidence" value="ECO:0000318"/>
    <property type="project" value="GO_Central"/>
</dbReference>
<dbReference type="GO" id="GO:0009424">
    <property type="term" value="C:bacterial-type flagellum hook"/>
    <property type="evidence" value="ECO:0007669"/>
    <property type="project" value="InterPro"/>
</dbReference>
<dbReference type="GO" id="GO:0005576">
    <property type="term" value="C:extracellular region"/>
    <property type="evidence" value="ECO:0007669"/>
    <property type="project" value="UniProtKB-SubCell"/>
</dbReference>
<dbReference type="GO" id="GO:0071973">
    <property type="term" value="P:bacterial-type flagellum-dependent cell motility"/>
    <property type="evidence" value="ECO:0000318"/>
    <property type="project" value="GO_Central"/>
</dbReference>
<dbReference type="GO" id="GO:0007155">
    <property type="term" value="P:cell adhesion"/>
    <property type="evidence" value="ECO:0007669"/>
    <property type="project" value="InterPro"/>
</dbReference>
<dbReference type="InterPro" id="IPR010810">
    <property type="entry name" value="Flagellin_hook_IN_motif"/>
</dbReference>
<dbReference type="InterPro" id="IPR040026">
    <property type="entry name" value="FliD"/>
</dbReference>
<dbReference type="InterPro" id="IPR010809">
    <property type="entry name" value="FliD_C"/>
</dbReference>
<dbReference type="InterPro" id="IPR003481">
    <property type="entry name" value="FliD_N"/>
</dbReference>
<dbReference type="NCBIfam" id="NF006435">
    <property type="entry name" value="PRK08724.1"/>
    <property type="match status" value="1"/>
</dbReference>
<dbReference type="PANTHER" id="PTHR30288">
    <property type="entry name" value="FLAGELLAR CAP/ASSEMBLY PROTEIN FLID"/>
    <property type="match status" value="1"/>
</dbReference>
<dbReference type="PANTHER" id="PTHR30288:SF0">
    <property type="entry name" value="FLAGELLAR HOOK-ASSOCIATED PROTEIN 2"/>
    <property type="match status" value="1"/>
</dbReference>
<dbReference type="Pfam" id="PF07196">
    <property type="entry name" value="Flagellin_IN"/>
    <property type="match status" value="1"/>
</dbReference>
<dbReference type="Pfam" id="PF07195">
    <property type="entry name" value="FliD_C"/>
    <property type="match status" value="1"/>
</dbReference>
<dbReference type="Pfam" id="PF02465">
    <property type="entry name" value="FliD_N"/>
    <property type="match status" value="1"/>
</dbReference>
<accession>Q9KQ63</accession>